<dbReference type="EC" id="2.1.1.166" evidence="1"/>
<dbReference type="EMBL" id="CP000884">
    <property type="protein sequence ID" value="ABX37555.1"/>
    <property type="molecule type" value="Genomic_DNA"/>
</dbReference>
<dbReference type="RefSeq" id="WP_012206725.1">
    <property type="nucleotide sequence ID" value="NC_010002.1"/>
</dbReference>
<dbReference type="SMR" id="A9BML0"/>
<dbReference type="STRING" id="398578.Daci_4926"/>
<dbReference type="GeneID" id="24118937"/>
<dbReference type="KEGG" id="dac:Daci_4926"/>
<dbReference type="eggNOG" id="COG0293">
    <property type="taxonomic scope" value="Bacteria"/>
</dbReference>
<dbReference type="HOGENOM" id="CLU_009422_4_1_4"/>
<dbReference type="Proteomes" id="UP000000784">
    <property type="component" value="Chromosome"/>
</dbReference>
<dbReference type="GO" id="GO:0005737">
    <property type="term" value="C:cytoplasm"/>
    <property type="evidence" value="ECO:0007669"/>
    <property type="project" value="UniProtKB-SubCell"/>
</dbReference>
<dbReference type="GO" id="GO:0008650">
    <property type="term" value="F:rRNA (uridine-2'-O-)-methyltransferase activity"/>
    <property type="evidence" value="ECO:0007669"/>
    <property type="project" value="UniProtKB-UniRule"/>
</dbReference>
<dbReference type="FunFam" id="3.40.50.150:FF:000005">
    <property type="entry name" value="Ribosomal RNA large subunit methyltransferase E"/>
    <property type="match status" value="1"/>
</dbReference>
<dbReference type="Gene3D" id="3.40.50.150">
    <property type="entry name" value="Vaccinia Virus protein VP39"/>
    <property type="match status" value="1"/>
</dbReference>
<dbReference type="HAMAP" id="MF_01547">
    <property type="entry name" value="RNA_methyltr_E"/>
    <property type="match status" value="1"/>
</dbReference>
<dbReference type="InterPro" id="IPR050082">
    <property type="entry name" value="RNA_methyltr_RlmE"/>
</dbReference>
<dbReference type="InterPro" id="IPR002877">
    <property type="entry name" value="RNA_MeTrfase_FtsJ_dom"/>
</dbReference>
<dbReference type="InterPro" id="IPR015507">
    <property type="entry name" value="rRNA-MeTfrase_E"/>
</dbReference>
<dbReference type="InterPro" id="IPR029063">
    <property type="entry name" value="SAM-dependent_MTases_sf"/>
</dbReference>
<dbReference type="PANTHER" id="PTHR10920">
    <property type="entry name" value="RIBOSOMAL RNA METHYLTRANSFERASE"/>
    <property type="match status" value="1"/>
</dbReference>
<dbReference type="PANTHER" id="PTHR10920:SF18">
    <property type="entry name" value="RRNA METHYLTRANSFERASE 2, MITOCHONDRIAL"/>
    <property type="match status" value="1"/>
</dbReference>
<dbReference type="Pfam" id="PF01728">
    <property type="entry name" value="FtsJ"/>
    <property type="match status" value="1"/>
</dbReference>
<dbReference type="PIRSF" id="PIRSF005461">
    <property type="entry name" value="23S_rRNA_mtase"/>
    <property type="match status" value="1"/>
</dbReference>
<dbReference type="SUPFAM" id="SSF53335">
    <property type="entry name" value="S-adenosyl-L-methionine-dependent methyltransferases"/>
    <property type="match status" value="1"/>
</dbReference>
<proteinExistence type="inferred from homology"/>
<sequence>MKVNTKSKKVNKAWLNSHVNDPYVKAAQKDGYRARAAYKLKEIDEQLKLIRPGATVVDLGSTPGAWSQYVRRCLSPEGAAVGALNGRIISLDLLPMEPIEGVQFILGDFREEPVLAQLQEALGGGKADVVVSDMAPNLSGNGTTDAARIALLVELAVDFSIHHMKPEGALVVKLFHGGAYDDLVALFRQTFKVVKPIKPKSSRDKSSETFLVGMGLK</sequence>
<feature type="chain" id="PRO_1000194988" description="Ribosomal RNA large subunit methyltransferase E">
    <location>
        <begin position="1"/>
        <end position="217"/>
    </location>
</feature>
<feature type="active site" description="Proton acceptor" evidence="1">
    <location>
        <position position="173"/>
    </location>
</feature>
<feature type="binding site" evidence="1">
    <location>
        <position position="64"/>
    </location>
    <ligand>
        <name>S-adenosyl-L-methionine</name>
        <dbReference type="ChEBI" id="CHEBI:59789"/>
    </ligand>
</feature>
<feature type="binding site" evidence="1">
    <location>
        <position position="66"/>
    </location>
    <ligand>
        <name>S-adenosyl-L-methionine</name>
        <dbReference type="ChEBI" id="CHEBI:59789"/>
    </ligand>
</feature>
<feature type="binding site" evidence="1">
    <location>
        <position position="92"/>
    </location>
    <ligand>
        <name>S-adenosyl-L-methionine</name>
        <dbReference type="ChEBI" id="CHEBI:59789"/>
    </ligand>
</feature>
<feature type="binding site" evidence="1">
    <location>
        <position position="108"/>
    </location>
    <ligand>
        <name>S-adenosyl-L-methionine</name>
        <dbReference type="ChEBI" id="CHEBI:59789"/>
    </ligand>
</feature>
<feature type="binding site" evidence="1">
    <location>
        <position position="133"/>
    </location>
    <ligand>
        <name>S-adenosyl-L-methionine</name>
        <dbReference type="ChEBI" id="CHEBI:59789"/>
    </ligand>
</feature>
<organism>
    <name type="scientific">Delftia acidovorans (strain DSM 14801 / SPH-1)</name>
    <dbReference type="NCBI Taxonomy" id="398578"/>
    <lineage>
        <taxon>Bacteria</taxon>
        <taxon>Pseudomonadati</taxon>
        <taxon>Pseudomonadota</taxon>
        <taxon>Betaproteobacteria</taxon>
        <taxon>Burkholderiales</taxon>
        <taxon>Comamonadaceae</taxon>
        <taxon>Delftia</taxon>
    </lineage>
</organism>
<evidence type="ECO:0000255" key="1">
    <source>
        <dbReference type="HAMAP-Rule" id="MF_01547"/>
    </source>
</evidence>
<keyword id="KW-0963">Cytoplasm</keyword>
<keyword id="KW-0489">Methyltransferase</keyword>
<keyword id="KW-1185">Reference proteome</keyword>
<keyword id="KW-0698">rRNA processing</keyword>
<keyword id="KW-0949">S-adenosyl-L-methionine</keyword>
<keyword id="KW-0808">Transferase</keyword>
<name>RLME_DELAS</name>
<accession>A9BML0</accession>
<gene>
    <name evidence="1" type="primary">rlmE</name>
    <name evidence="1" type="synonym">ftsJ</name>
    <name evidence="1" type="synonym">rrmJ</name>
    <name type="ordered locus">Daci_4926</name>
</gene>
<reference key="1">
    <citation type="submission" date="2007-11" db="EMBL/GenBank/DDBJ databases">
        <title>Complete sequence of Delftia acidovorans DSM 14801 / SPH-1.</title>
        <authorList>
            <person name="Copeland A."/>
            <person name="Lucas S."/>
            <person name="Lapidus A."/>
            <person name="Barry K."/>
            <person name="Glavina del Rio T."/>
            <person name="Dalin E."/>
            <person name="Tice H."/>
            <person name="Pitluck S."/>
            <person name="Lowry S."/>
            <person name="Clum A."/>
            <person name="Schmutz J."/>
            <person name="Larimer F."/>
            <person name="Land M."/>
            <person name="Hauser L."/>
            <person name="Kyrpides N."/>
            <person name="Kim E."/>
            <person name="Schleheck D."/>
            <person name="Richardson P."/>
        </authorList>
    </citation>
    <scope>NUCLEOTIDE SEQUENCE [LARGE SCALE GENOMIC DNA]</scope>
    <source>
        <strain>DSM 14801 / SPH-1</strain>
    </source>
</reference>
<protein>
    <recommendedName>
        <fullName evidence="1">Ribosomal RNA large subunit methyltransferase E</fullName>
        <ecNumber evidence="1">2.1.1.166</ecNumber>
    </recommendedName>
    <alternativeName>
        <fullName evidence="1">23S rRNA Um2552 methyltransferase</fullName>
    </alternativeName>
    <alternativeName>
        <fullName evidence="1">rRNA (uridine-2'-O-)-methyltransferase</fullName>
    </alternativeName>
</protein>
<comment type="function">
    <text evidence="1">Specifically methylates the uridine in position 2552 of 23S rRNA at the 2'-O position of the ribose in the fully assembled 50S ribosomal subunit.</text>
</comment>
<comment type="catalytic activity">
    <reaction evidence="1">
        <text>uridine(2552) in 23S rRNA + S-adenosyl-L-methionine = 2'-O-methyluridine(2552) in 23S rRNA + S-adenosyl-L-homocysteine + H(+)</text>
        <dbReference type="Rhea" id="RHEA:42720"/>
        <dbReference type="Rhea" id="RHEA-COMP:10202"/>
        <dbReference type="Rhea" id="RHEA-COMP:10203"/>
        <dbReference type="ChEBI" id="CHEBI:15378"/>
        <dbReference type="ChEBI" id="CHEBI:57856"/>
        <dbReference type="ChEBI" id="CHEBI:59789"/>
        <dbReference type="ChEBI" id="CHEBI:65315"/>
        <dbReference type="ChEBI" id="CHEBI:74478"/>
        <dbReference type="EC" id="2.1.1.166"/>
    </reaction>
</comment>
<comment type="subcellular location">
    <subcellularLocation>
        <location evidence="1">Cytoplasm</location>
    </subcellularLocation>
</comment>
<comment type="similarity">
    <text evidence="1">Belongs to the class I-like SAM-binding methyltransferase superfamily. RNA methyltransferase RlmE family.</text>
</comment>